<gene>
    <name evidence="1" type="primary">asnS</name>
    <name type="ordered locus">spyM18_0712</name>
</gene>
<organism>
    <name type="scientific">Streptococcus pyogenes serotype M18 (strain MGAS8232)</name>
    <dbReference type="NCBI Taxonomy" id="186103"/>
    <lineage>
        <taxon>Bacteria</taxon>
        <taxon>Bacillati</taxon>
        <taxon>Bacillota</taxon>
        <taxon>Bacilli</taxon>
        <taxon>Lactobacillales</taxon>
        <taxon>Streptococcaceae</taxon>
        <taxon>Streptococcus</taxon>
    </lineage>
</organism>
<protein>
    <recommendedName>
        <fullName evidence="1">Asparagine--tRNA ligase</fullName>
        <ecNumber evidence="1">6.1.1.22</ecNumber>
    </recommendedName>
    <alternativeName>
        <fullName evidence="1">Asparaginyl-tRNA synthetase</fullName>
        <shortName evidence="1">AsnRS</shortName>
    </alternativeName>
</protein>
<comment type="catalytic activity">
    <reaction evidence="1">
        <text>tRNA(Asn) + L-asparagine + ATP = L-asparaginyl-tRNA(Asn) + AMP + diphosphate + H(+)</text>
        <dbReference type="Rhea" id="RHEA:11180"/>
        <dbReference type="Rhea" id="RHEA-COMP:9659"/>
        <dbReference type="Rhea" id="RHEA-COMP:9674"/>
        <dbReference type="ChEBI" id="CHEBI:15378"/>
        <dbReference type="ChEBI" id="CHEBI:30616"/>
        <dbReference type="ChEBI" id="CHEBI:33019"/>
        <dbReference type="ChEBI" id="CHEBI:58048"/>
        <dbReference type="ChEBI" id="CHEBI:78442"/>
        <dbReference type="ChEBI" id="CHEBI:78515"/>
        <dbReference type="ChEBI" id="CHEBI:456215"/>
        <dbReference type="EC" id="6.1.1.22"/>
    </reaction>
</comment>
<comment type="subunit">
    <text evidence="1">Homodimer.</text>
</comment>
<comment type="subcellular location">
    <subcellularLocation>
        <location evidence="1">Cytoplasm</location>
    </subcellularLocation>
</comment>
<comment type="similarity">
    <text evidence="1">Belongs to the class-II aminoacyl-tRNA synthetase family.</text>
</comment>
<proteinExistence type="inferred from homology"/>
<sequence length="448" mass="51208">MSKKLISIVDVKDYVGQEVTIGAWVANKSGKGKIAFVQLRDGSAFFQGVAFKPNFIEKYGEESGLEKFDVIKRLNQETSVYVTGIVKEDERSKFGYELDITDLEIIGESHEYPITPKEHGTDFLMDNRHLWLRSRKQMAVMQIRNAIIYATYEFFDQNGFIKFDSPILSENAAEDSTELFETDYFGKPAFLSQSGQLYLEAGAMALGRVFDFGPVFRAEKSKTRRHLTEFWMMDAEYSFLSHEESLDLQEAYVKALIQGVLDRAPQALDILERDVEALKRYITEPFKRVSYDDAITLLQEHEADEDTDYEHLEHGDDFGSPHETWISNYFGVPTFVVNYPASFKAFYMKPVPGNPERVLCADLLAPEGYGEIIGGSMREDNYDALVAKMDELGMDKSEYDFYLDLRKYGSVPHGGFGIGIERMVTFVAGTKHIREAIPFPRMLHRIRP</sequence>
<accession>P67577</accession>
<accession>Q9A0R9</accession>
<keyword id="KW-0030">Aminoacyl-tRNA synthetase</keyword>
<keyword id="KW-0067">ATP-binding</keyword>
<keyword id="KW-0963">Cytoplasm</keyword>
<keyword id="KW-0436">Ligase</keyword>
<keyword id="KW-0547">Nucleotide-binding</keyword>
<keyword id="KW-0648">Protein biosynthesis</keyword>
<evidence type="ECO:0000255" key="1">
    <source>
        <dbReference type="HAMAP-Rule" id="MF_00534"/>
    </source>
</evidence>
<feature type="chain" id="PRO_0000176465" description="Asparagine--tRNA ligase">
    <location>
        <begin position="1"/>
        <end position="448"/>
    </location>
</feature>
<reference key="1">
    <citation type="journal article" date="2002" name="Proc. Natl. Acad. Sci. U.S.A.">
        <title>Genome sequence and comparative microarray analysis of serotype M18 group A Streptococcus strains associated with acute rheumatic fever outbreaks.</title>
        <authorList>
            <person name="Smoot J.C."/>
            <person name="Barbian K.D."/>
            <person name="Van Gompel J.J."/>
            <person name="Smoot L.M."/>
            <person name="Chaussee M.S."/>
            <person name="Sylva G.L."/>
            <person name="Sturdevant D.E."/>
            <person name="Ricklefs S.M."/>
            <person name="Porcella S.F."/>
            <person name="Parkins L.D."/>
            <person name="Beres S.B."/>
            <person name="Campbell D.S."/>
            <person name="Smith T.M."/>
            <person name="Zhang Q."/>
            <person name="Kapur V."/>
            <person name="Daly J.A."/>
            <person name="Veasy L.G."/>
            <person name="Musser J.M."/>
        </authorList>
    </citation>
    <scope>NUCLEOTIDE SEQUENCE [LARGE SCALE GENOMIC DNA]</scope>
    <source>
        <strain>MGAS8232</strain>
    </source>
</reference>
<name>SYN_STRP8</name>
<dbReference type="EC" id="6.1.1.22" evidence="1"/>
<dbReference type="EMBL" id="AE009949">
    <property type="protein sequence ID" value="AAL97383.1"/>
    <property type="molecule type" value="Genomic_DNA"/>
</dbReference>
<dbReference type="RefSeq" id="WP_002985437.1">
    <property type="nucleotide sequence ID" value="NC_003485.1"/>
</dbReference>
<dbReference type="SMR" id="P67577"/>
<dbReference type="GeneID" id="69901153"/>
<dbReference type="KEGG" id="spm:spyM18_0712"/>
<dbReference type="HOGENOM" id="CLU_004553_2_0_9"/>
<dbReference type="GO" id="GO:0005737">
    <property type="term" value="C:cytoplasm"/>
    <property type="evidence" value="ECO:0007669"/>
    <property type="project" value="UniProtKB-SubCell"/>
</dbReference>
<dbReference type="GO" id="GO:0004816">
    <property type="term" value="F:asparagine-tRNA ligase activity"/>
    <property type="evidence" value="ECO:0007669"/>
    <property type="project" value="UniProtKB-UniRule"/>
</dbReference>
<dbReference type="GO" id="GO:0005524">
    <property type="term" value="F:ATP binding"/>
    <property type="evidence" value="ECO:0007669"/>
    <property type="project" value="UniProtKB-UniRule"/>
</dbReference>
<dbReference type="GO" id="GO:0140096">
    <property type="term" value="F:catalytic activity, acting on a protein"/>
    <property type="evidence" value="ECO:0007669"/>
    <property type="project" value="UniProtKB-ARBA"/>
</dbReference>
<dbReference type="GO" id="GO:0003676">
    <property type="term" value="F:nucleic acid binding"/>
    <property type="evidence" value="ECO:0007669"/>
    <property type="project" value="InterPro"/>
</dbReference>
<dbReference type="GO" id="GO:0016740">
    <property type="term" value="F:transferase activity"/>
    <property type="evidence" value="ECO:0007669"/>
    <property type="project" value="UniProtKB-ARBA"/>
</dbReference>
<dbReference type="GO" id="GO:0006421">
    <property type="term" value="P:asparaginyl-tRNA aminoacylation"/>
    <property type="evidence" value="ECO:0007669"/>
    <property type="project" value="UniProtKB-UniRule"/>
</dbReference>
<dbReference type="CDD" id="cd04323">
    <property type="entry name" value="AsnRS_cyto_like_N"/>
    <property type="match status" value="1"/>
</dbReference>
<dbReference type="CDD" id="cd00776">
    <property type="entry name" value="AsxRS_core"/>
    <property type="match status" value="1"/>
</dbReference>
<dbReference type="Gene3D" id="3.30.930.10">
    <property type="entry name" value="Bira Bifunctional Protein, Domain 2"/>
    <property type="match status" value="1"/>
</dbReference>
<dbReference type="Gene3D" id="2.40.50.140">
    <property type="entry name" value="Nucleic acid-binding proteins"/>
    <property type="match status" value="1"/>
</dbReference>
<dbReference type="HAMAP" id="MF_00534">
    <property type="entry name" value="Asn_tRNA_synth"/>
    <property type="match status" value="1"/>
</dbReference>
<dbReference type="InterPro" id="IPR004364">
    <property type="entry name" value="Aa-tRNA-synt_II"/>
</dbReference>
<dbReference type="InterPro" id="IPR006195">
    <property type="entry name" value="aa-tRNA-synth_II"/>
</dbReference>
<dbReference type="InterPro" id="IPR045864">
    <property type="entry name" value="aa-tRNA-synth_II/BPL/LPL"/>
</dbReference>
<dbReference type="InterPro" id="IPR004522">
    <property type="entry name" value="Asn-tRNA-ligase"/>
</dbReference>
<dbReference type="InterPro" id="IPR002312">
    <property type="entry name" value="Asp/Asn-tRNA-synth_IIb"/>
</dbReference>
<dbReference type="InterPro" id="IPR012340">
    <property type="entry name" value="NA-bd_OB-fold"/>
</dbReference>
<dbReference type="InterPro" id="IPR004365">
    <property type="entry name" value="NA-bd_OB_tRNA"/>
</dbReference>
<dbReference type="NCBIfam" id="TIGR00457">
    <property type="entry name" value="asnS"/>
    <property type="match status" value="1"/>
</dbReference>
<dbReference type="NCBIfam" id="NF003037">
    <property type="entry name" value="PRK03932.1"/>
    <property type="match status" value="1"/>
</dbReference>
<dbReference type="PANTHER" id="PTHR22594:SF34">
    <property type="entry name" value="ASPARAGINE--TRNA LIGASE, MITOCHONDRIAL-RELATED"/>
    <property type="match status" value="1"/>
</dbReference>
<dbReference type="PANTHER" id="PTHR22594">
    <property type="entry name" value="ASPARTYL/LYSYL-TRNA SYNTHETASE"/>
    <property type="match status" value="1"/>
</dbReference>
<dbReference type="Pfam" id="PF00152">
    <property type="entry name" value="tRNA-synt_2"/>
    <property type="match status" value="1"/>
</dbReference>
<dbReference type="Pfam" id="PF01336">
    <property type="entry name" value="tRNA_anti-codon"/>
    <property type="match status" value="1"/>
</dbReference>
<dbReference type="PRINTS" id="PR01042">
    <property type="entry name" value="TRNASYNTHASP"/>
</dbReference>
<dbReference type="SUPFAM" id="SSF55681">
    <property type="entry name" value="Class II aaRS and biotin synthetases"/>
    <property type="match status" value="1"/>
</dbReference>
<dbReference type="SUPFAM" id="SSF50249">
    <property type="entry name" value="Nucleic acid-binding proteins"/>
    <property type="match status" value="1"/>
</dbReference>
<dbReference type="PROSITE" id="PS50862">
    <property type="entry name" value="AA_TRNA_LIGASE_II"/>
    <property type="match status" value="1"/>
</dbReference>